<feature type="chain" id="PRO_1000060327" description="Ion-translocating oxidoreductase complex subunit A">
    <location>
        <begin position="1"/>
        <end position="193"/>
    </location>
</feature>
<feature type="transmembrane region" description="Helical" evidence="1">
    <location>
        <begin position="5"/>
        <end position="25"/>
    </location>
</feature>
<feature type="transmembrane region" description="Helical" evidence="1">
    <location>
        <begin position="39"/>
        <end position="59"/>
    </location>
</feature>
<feature type="transmembrane region" description="Helical" evidence="1">
    <location>
        <begin position="63"/>
        <end position="83"/>
    </location>
</feature>
<feature type="transmembrane region" description="Helical" evidence="1">
    <location>
        <begin position="102"/>
        <end position="122"/>
    </location>
</feature>
<feature type="transmembrane region" description="Helical" evidence="1">
    <location>
        <begin position="134"/>
        <end position="154"/>
    </location>
</feature>
<feature type="transmembrane region" description="Helical" evidence="1">
    <location>
        <begin position="171"/>
        <end position="191"/>
    </location>
</feature>
<comment type="function">
    <text evidence="1">Part of a membrane-bound complex that couples electron transfer with translocation of ions across the membrane. Required to maintain the reduced state of SoxR.</text>
</comment>
<comment type="subunit">
    <text evidence="1">The complex is composed of six subunits: RsxA, RsxB, RsxC, RsxD, RsxE and RsxG.</text>
</comment>
<comment type="subcellular location">
    <subcellularLocation>
        <location evidence="1">Cell inner membrane</location>
        <topology evidence="1">Multi-pass membrane protein</topology>
    </subcellularLocation>
</comment>
<comment type="similarity">
    <text evidence="1">Belongs to the NqrDE/RnfAE family.</text>
</comment>
<proteinExistence type="inferred from homology"/>
<sequence>MTDYLLLFVGTVLVNNFVLVKFLGLCPFMGVSKKLETAMGMGLATTFVMTLASICAWLIDTWILIPLNLIYLRTLAFILVIAVVVQFTEMVVRKTSPVLYRLLGIFLPLITTNCAVLGVALLNINLGHNFLQSALYGFSAAVGFSLVMVLFAAIRERLAVADVPAPFRGNAIALITAGLMSLAFMGFSGLVKL</sequence>
<reference key="1">
    <citation type="journal article" date="2008" name="J. Bacteriol.">
        <title>The pangenome structure of Escherichia coli: comparative genomic analysis of E. coli commensal and pathogenic isolates.</title>
        <authorList>
            <person name="Rasko D.A."/>
            <person name="Rosovitz M.J."/>
            <person name="Myers G.S.A."/>
            <person name="Mongodin E.F."/>
            <person name="Fricke W.F."/>
            <person name="Gajer P."/>
            <person name="Crabtree J."/>
            <person name="Sebaihia M."/>
            <person name="Thomson N.R."/>
            <person name="Chaudhuri R."/>
            <person name="Henderson I.R."/>
            <person name="Sperandio V."/>
            <person name="Ravel J."/>
        </authorList>
    </citation>
    <scope>NUCLEOTIDE SEQUENCE [LARGE SCALE GENOMIC DNA]</scope>
    <source>
        <strain>HS</strain>
    </source>
</reference>
<keyword id="KW-0997">Cell inner membrane</keyword>
<keyword id="KW-1003">Cell membrane</keyword>
<keyword id="KW-0249">Electron transport</keyword>
<keyword id="KW-0472">Membrane</keyword>
<keyword id="KW-1278">Translocase</keyword>
<keyword id="KW-0812">Transmembrane</keyword>
<keyword id="KW-1133">Transmembrane helix</keyword>
<keyword id="KW-0813">Transport</keyword>
<protein>
    <recommendedName>
        <fullName evidence="1">Ion-translocating oxidoreductase complex subunit A</fullName>
        <ecNumber evidence="1">7.-.-.-</ecNumber>
    </recommendedName>
    <alternativeName>
        <fullName evidence="1">Rsx electron transport complex subunit A</fullName>
    </alternativeName>
</protein>
<dbReference type="EC" id="7.-.-.-" evidence="1"/>
<dbReference type="EMBL" id="CP000802">
    <property type="protein sequence ID" value="ABV06024.1"/>
    <property type="molecule type" value="Genomic_DNA"/>
</dbReference>
<dbReference type="RefSeq" id="WP_000133193.1">
    <property type="nucleotide sequence ID" value="NC_009800.1"/>
</dbReference>
<dbReference type="SMR" id="A8A0H0"/>
<dbReference type="GeneID" id="89516393"/>
<dbReference type="KEGG" id="ecx:EcHS_A1703"/>
<dbReference type="HOGENOM" id="CLU_095255_1_0_6"/>
<dbReference type="GO" id="GO:0005886">
    <property type="term" value="C:plasma membrane"/>
    <property type="evidence" value="ECO:0007669"/>
    <property type="project" value="UniProtKB-SubCell"/>
</dbReference>
<dbReference type="GO" id="GO:0022900">
    <property type="term" value="P:electron transport chain"/>
    <property type="evidence" value="ECO:0007669"/>
    <property type="project" value="UniProtKB-UniRule"/>
</dbReference>
<dbReference type="HAMAP" id="MF_00459">
    <property type="entry name" value="RsxA_RnfA"/>
    <property type="match status" value="1"/>
</dbReference>
<dbReference type="InterPro" id="IPR011293">
    <property type="entry name" value="Ion_transpt_RnfA/RsxA"/>
</dbReference>
<dbReference type="InterPro" id="IPR003667">
    <property type="entry name" value="NqrDE/RnfAE"/>
</dbReference>
<dbReference type="InterPro" id="IPR050133">
    <property type="entry name" value="NqrDE/RnfAE_oxidrdctase"/>
</dbReference>
<dbReference type="NCBIfam" id="NF003481">
    <property type="entry name" value="PRK05151.1"/>
    <property type="match status" value="1"/>
</dbReference>
<dbReference type="NCBIfam" id="TIGR01943">
    <property type="entry name" value="rnfA"/>
    <property type="match status" value="1"/>
</dbReference>
<dbReference type="PANTHER" id="PTHR30335">
    <property type="entry name" value="INTEGRAL MEMBRANE PROTEIN OF SOXR-REDUCING COMPLEX"/>
    <property type="match status" value="1"/>
</dbReference>
<dbReference type="PANTHER" id="PTHR30335:SF0">
    <property type="entry name" value="ION-TRANSLOCATING OXIDOREDUCTASE COMPLEX SUBUNIT A"/>
    <property type="match status" value="1"/>
</dbReference>
<dbReference type="Pfam" id="PF02508">
    <property type="entry name" value="Rnf-Nqr"/>
    <property type="match status" value="1"/>
</dbReference>
<dbReference type="PIRSF" id="PIRSF006102">
    <property type="entry name" value="NQR_DE"/>
    <property type="match status" value="1"/>
</dbReference>
<gene>
    <name evidence="1" type="primary">rsxA</name>
    <name type="synonym">rnfA</name>
    <name type="ordered locus">EcHS_A1703</name>
</gene>
<name>RSXA_ECOHS</name>
<organism>
    <name type="scientific">Escherichia coli O9:H4 (strain HS)</name>
    <dbReference type="NCBI Taxonomy" id="331112"/>
    <lineage>
        <taxon>Bacteria</taxon>
        <taxon>Pseudomonadati</taxon>
        <taxon>Pseudomonadota</taxon>
        <taxon>Gammaproteobacteria</taxon>
        <taxon>Enterobacterales</taxon>
        <taxon>Enterobacteriaceae</taxon>
        <taxon>Escherichia</taxon>
    </lineage>
</organism>
<evidence type="ECO:0000255" key="1">
    <source>
        <dbReference type="HAMAP-Rule" id="MF_00459"/>
    </source>
</evidence>
<accession>A8A0H0</accession>